<name>PIP11_ORYSJ</name>
<organism>
    <name type="scientific">Oryza sativa subsp. japonica</name>
    <name type="common">Rice</name>
    <dbReference type="NCBI Taxonomy" id="39947"/>
    <lineage>
        <taxon>Eukaryota</taxon>
        <taxon>Viridiplantae</taxon>
        <taxon>Streptophyta</taxon>
        <taxon>Embryophyta</taxon>
        <taxon>Tracheophyta</taxon>
        <taxon>Spermatophyta</taxon>
        <taxon>Magnoliopsida</taxon>
        <taxon>Liliopsida</taxon>
        <taxon>Poales</taxon>
        <taxon>Poaceae</taxon>
        <taxon>BOP clade</taxon>
        <taxon>Oryzoideae</taxon>
        <taxon>Oryzeae</taxon>
        <taxon>Oryzinae</taxon>
        <taxon>Oryza</taxon>
        <taxon>Oryza sativa</taxon>
    </lineage>
</organism>
<comment type="function">
    <text evidence="5">May function as water channel to facilitate the transport of water across cell membrane.</text>
</comment>
<comment type="subcellular location">
    <subcellularLocation>
        <location evidence="1">Cell membrane</location>
        <topology evidence="1">Multi-pass membrane protein</topology>
    </subcellularLocation>
</comment>
<comment type="tissue specificity">
    <text evidence="4 5 6">Expressed in roots, leaves and anthers.</text>
</comment>
<comment type="induction">
    <text evidence="4 5 6">Down-regulated by osmotic stress, chilling, drought and treatment with gibberellin and abscisic acid (ABA). Increased expression in the recovery (post-stress) phase of gibberellin and abscisic acid treatment or drought.</text>
</comment>
<comment type="domain">
    <text>Aquaporins contain two tandem repeats each containing three membrane-spanning domains and a pore-forming loop with the signature motif Asn-Pro-Ala (NPA).</text>
</comment>
<comment type="miscellaneous">
    <text>Recovery of PIP1.1 expression after chilling is increased by pretreatment with mannitol.</text>
</comment>
<comment type="similarity">
    <text evidence="7">Belongs to the MIP/aquaporin (TC 1.A.8) family. PIP (TC 1.A.8.11) subfamily.</text>
</comment>
<comment type="sequence caution" evidence="7">
    <conflict type="frameshift">
        <sequence resource="EMBL-CDS" id="EAZ24111"/>
    </conflict>
</comment>
<dbReference type="EMBL" id="AJ224327">
    <property type="protein sequence ID" value="CAA11896.1"/>
    <property type="molecule type" value="mRNA"/>
</dbReference>
<dbReference type="EMBL" id="AB009665">
    <property type="protein sequence ID" value="BAA24016.1"/>
    <property type="molecule type" value="mRNA"/>
</dbReference>
<dbReference type="EMBL" id="AP004139">
    <property type="protein sequence ID" value="BAD27775.1"/>
    <property type="molecule type" value="Genomic_DNA"/>
</dbReference>
<dbReference type="EMBL" id="AP005108">
    <property type="protein sequence ID" value="BAD28398.1"/>
    <property type="molecule type" value="Genomic_DNA"/>
</dbReference>
<dbReference type="EMBL" id="AP008208">
    <property type="protein sequence ID" value="BAF09586.1"/>
    <property type="molecule type" value="Genomic_DNA"/>
</dbReference>
<dbReference type="EMBL" id="AP014958">
    <property type="protein sequence ID" value="BAS80186.1"/>
    <property type="molecule type" value="Genomic_DNA"/>
</dbReference>
<dbReference type="EMBL" id="CM000139">
    <property type="protein sequence ID" value="EAZ24111.1"/>
    <property type="status" value="ALT_FRAME"/>
    <property type="molecule type" value="Genomic_DNA"/>
</dbReference>
<dbReference type="RefSeq" id="XP_015625393.1">
    <property type="nucleotide sequence ID" value="XM_015769907.1"/>
</dbReference>
<dbReference type="SMR" id="Q6EU94"/>
<dbReference type="FunCoup" id="Q6EU94">
    <property type="interactions" value="375"/>
</dbReference>
<dbReference type="STRING" id="39947.Q6EU94"/>
<dbReference type="PaxDb" id="39947-Q6EU94"/>
<dbReference type="EnsemblPlants" id="Os02t0666200-01">
    <property type="protein sequence ID" value="Os02t0666200-01"/>
    <property type="gene ID" value="Os02g0666200"/>
</dbReference>
<dbReference type="EnsemblPlants" id="Os02t0666200-02">
    <property type="protein sequence ID" value="Os02t0666200-02"/>
    <property type="gene ID" value="Os02g0666200"/>
</dbReference>
<dbReference type="Gramene" id="Os02t0666200-01">
    <property type="protein sequence ID" value="Os02t0666200-01"/>
    <property type="gene ID" value="Os02g0666200"/>
</dbReference>
<dbReference type="Gramene" id="Os02t0666200-02">
    <property type="protein sequence ID" value="Os02t0666200-02"/>
    <property type="gene ID" value="Os02g0666200"/>
</dbReference>
<dbReference type="KEGG" id="dosa:Os02g0666200"/>
<dbReference type="eggNOG" id="KOG0223">
    <property type="taxonomic scope" value="Eukaryota"/>
</dbReference>
<dbReference type="HOGENOM" id="CLU_020019_3_0_1"/>
<dbReference type="InParanoid" id="Q6EU94"/>
<dbReference type="OMA" id="EDHRRHE"/>
<dbReference type="OrthoDB" id="3222at2759"/>
<dbReference type="Proteomes" id="UP000000763">
    <property type="component" value="Chromosome 2"/>
</dbReference>
<dbReference type="Proteomes" id="UP000007752">
    <property type="component" value="Chromosome 2"/>
</dbReference>
<dbReference type="Proteomes" id="UP000059680">
    <property type="component" value="Chromosome 2"/>
</dbReference>
<dbReference type="ExpressionAtlas" id="Q6EU94">
    <property type="expression patterns" value="baseline and differential"/>
</dbReference>
<dbReference type="GO" id="GO:0005886">
    <property type="term" value="C:plasma membrane"/>
    <property type="evidence" value="ECO:0000318"/>
    <property type="project" value="GO_Central"/>
</dbReference>
<dbReference type="GO" id="GO:0015250">
    <property type="term" value="F:water channel activity"/>
    <property type="evidence" value="ECO:0000318"/>
    <property type="project" value="GO_Central"/>
</dbReference>
<dbReference type="GO" id="GO:0009414">
    <property type="term" value="P:response to water deprivation"/>
    <property type="evidence" value="ECO:0000318"/>
    <property type="project" value="GO_Central"/>
</dbReference>
<dbReference type="CDD" id="cd00333">
    <property type="entry name" value="MIP"/>
    <property type="match status" value="1"/>
</dbReference>
<dbReference type="FunFam" id="1.20.1080.10:FF:000001">
    <property type="entry name" value="Probable aquaporin PIP1-2"/>
    <property type="match status" value="1"/>
</dbReference>
<dbReference type="Gene3D" id="1.20.1080.10">
    <property type="entry name" value="Glycerol uptake facilitator protein"/>
    <property type="match status" value="1"/>
</dbReference>
<dbReference type="InterPro" id="IPR023271">
    <property type="entry name" value="Aquaporin-like"/>
</dbReference>
<dbReference type="InterPro" id="IPR034294">
    <property type="entry name" value="Aquaporin_transptr"/>
</dbReference>
<dbReference type="InterPro" id="IPR000425">
    <property type="entry name" value="MIP"/>
</dbReference>
<dbReference type="InterPro" id="IPR022357">
    <property type="entry name" value="MIP_CS"/>
</dbReference>
<dbReference type="NCBIfam" id="TIGR00861">
    <property type="entry name" value="MIP"/>
    <property type="match status" value="1"/>
</dbReference>
<dbReference type="PANTHER" id="PTHR45687">
    <property type="entry name" value="AQUAPORIN OR AQUAGLYCEROPORIN RELATED"/>
    <property type="match status" value="1"/>
</dbReference>
<dbReference type="Pfam" id="PF00230">
    <property type="entry name" value="MIP"/>
    <property type="match status" value="1"/>
</dbReference>
<dbReference type="PRINTS" id="PR00783">
    <property type="entry name" value="MINTRINSICP"/>
</dbReference>
<dbReference type="SUPFAM" id="SSF81338">
    <property type="entry name" value="Aquaporin-like"/>
    <property type="match status" value="1"/>
</dbReference>
<dbReference type="PROSITE" id="PS00221">
    <property type="entry name" value="MIP"/>
    <property type="match status" value="1"/>
</dbReference>
<sequence length="289" mass="30760">MEGKEEDVRLGANRYSERQPIGTAAQGAGDDKDYKEPPPAPLFEPGELKSWSFYRAGIAEFVATFLFLYITILTVMGVSKSSSKCATVGIQGIAWSFGGMIFALVYCTAGISGGHINPAVTFGLFLARKLSLTRAIFYIVMQCLGAICGAGVVKGFQQGLYMGNGGGANVVASGYTKGDGLGAEIVGTFILVYTVFSATDAKRNARDSHVPILAPLPIGFAVFLVHLATIPITGTGINPARSLGAAIIYNKDHAWNDHWIFWVGPFVGAALAAIYHQVIIRAIPFKSRS</sequence>
<feature type="chain" id="PRO_0000064031" description="Aquaporin PIP1-1">
    <location>
        <begin position="1"/>
        <end position="289"/>
    </location>
</feature>
<feature type="transmembrane region" description="Helical; Name=1" evidence="2">
    <location>
        <begin position="58"/>
        <end position="78"/>
    </location>
</feature>
<feature type="transmembrane region" description="Helical; Name=2" evidence="2">
    <location>
        <begin position="93"/>
        <end position="115"/>
    </location>
</feature>
<feature type="transmembrane region" description="Helical; Name=3" evidence="2">
    <location>
        <begin position="136"/>
        <end position="156"/>
    </location>
</feature>
<feature type="transmembrane region" description="Helical; Name=4" evidence="2">
    <location>
        <begin position="178"/>
        <end position="198"/>
    </location>
</feature>
<feature type="transmembrane region" description="Helical; Name=5" evidence="2">
    <location>
        <begin position="212"/>
        <end position="232"/>
    </location>
</feature>
<feature type="transmembrane region" description="Helical; Name=6" evidence="2">
    <location>
        <begin position="260"/>
        <end position="280"/>
    </location>
</feature>
<feature type="region of interest" description="Disordered" evidence="3">
    <location>
        <begin position="1"/>
        <end position="36"/>
    </location>
</feature>
<feature type="short sequence motif" description="NPA 1">
    <location>
        <begin position="117"/>
        <end position="119"/>
    </location>
</feature>
<feature type="short sequence motif" description="NPA 2">
    <location>
        <begin position="238"/>
        <end position="240"/>
    </location>
</feature>
<feature type="sequence conflict" description="In Ref. 2; BAA24016." evidence="7" ref="2">
    <original>LG</original>
    <variation>PR</variation>
    <location>
        <begin position="10"/>
        <end position="11"/>
    </location>
</feature>
<protein>
    <recommendedName>
        <fullName>Aquaporin PIP1-1</fullName>
    </recommendedName>
    <alternativeName>
        <fullName>OsPIP1;1</fullName>
    </alternativeName>
    <alternativeName>
        <fullName>Plasma membrane intrinsic protein 1-1</fullName>
    </alternativeName>
    <alternativeName>
        <fullName>Plasma membrane intrinsic protein 1a</fullName>
        <shortName>PIP1a</shortName>
    </alternativeName>
    <alternativeName>
        <fullName>Water channel protein RWC1</fullName>
        <shortName>RWC-1</shortName>
    </alternativeName>
</protein>
<keyword id="KW-1003">Cell membrane</keyword>
<keyword id="KW-0472">Membrane</keyword>
<keyword id="KW-1185">Reference proteome</keyword>
<keyword id="KW-0677">Repeat</keyword>
<keyword id="KW-0812">Transmembrane</keyword>
<keyword id="KW-1133">Transmembrane helix</keyword>
<keyword id="KW-0813">Transport</keyword>
<accession>Q6EU94</accession>
<accession>A3A9X2</accession>
<accession>O48664</accession>
<accession>O49913</accession>
<accession>Q0DYV2</accession>
<reference key="1">
    <citation type="journal article" date="1999" name="Plant Mol. Biol.">
        <title>Expression of two PIP genes in rapidly growing internodes of rice is not primarily controlled by meristem activity or cell expansion.</title>
        <authorList>
            <person name="Malz S."/>
            <person name="Sauter M."/>
        </authorList>
    </citation>
    <scope>NUCLEOTIDE SEQUENCE [MRNA]</scope>
    <scope>TISSUE SPECIFICITY</scope>
    <scope>INDUCTION</scope>
    <source>
        <tissue>Meristem</tissue>
    </source>
</reference>
<reference key="2">
    <citation type="journal article" date="2000" name="Plant Sci.">
        <title>Molecular cloning of a novel water channel from rice: its products expression in Xenopus oocytes and involvement in chilling tolerance.</title>
        <authorList>
            <person name="Li L.-G."/>
            <person name="Li S.-F."/>
            <person name="Tao Y."/>
            <person name="Kitagawa Y."/>
        </authorList>
    </citation>
    <scope>NUCLEOTIDE SEQUENCE [MRNA]</scope>
    <scope>FUNCTION</scope>
    <scope>TISSUE SPECIFICITY</scope>
    <scope>INDUCTION</scope>
    <source>
        <strain>cv. Wasetoittu</strain>
    </source>
</reference>
<reference key="3">
    <citation type="journal article" date="2005" name="Nature">
        <title>The map-based sequence of the rice genome.</title>
        <authorList>
            <consortium name="International rice genome sequencing project (IRGSP)"/>
        </authorList>
    </citation>
    <scope>NUCLEOTIDE SEQUENCE [LARGE SCALE GENOMIC DNA]</scope>
    <source>
        <strain>cv. Nipponbare</strain>
    </source>
</reference>
<reference key="4">
    <citation type="journal article" date="2008" name="Nucleic Acids Res.">
        <title>The rice annotation project database (RAP-DB): 2008 update.</title>
        <authorList>
            <consortium name="The rice annotation project (RAP)"/>
        </authorList>
    </citation>
    <scope>GENOME REANNOTATION</scope>
    <source>
        <strain>cv. Nipponbare</strain>
    </source>
</reference>
<reference key="5">
    <citation type="journal article" date="2013" name="Rice">
        <title>Improvement of the Oryza sativa Nipponbare reference genome using next generation sequence and optical map data.</title>
        <authorList>
            <person name="Kawahara Y."/>
            <person name="de la Bastide M."/>
            <person name="Hamilton J.P."/>
            <person name="Kanamori H."/>
            <person name="McCombie W.R."/>
            <person name="Ouyang S."/>
            <person name="Schwartz D.C."/>
            <person name="Tanaka T."/>
            <person name="Wu J."/>
            <person name="Zhou S."/>
            <person name="Childs K.L."/>
            <person name="Davidson R.M."/>
            <person name="Lin H."/>
            <person name="Quesada-Ocampo L."/>
            <person name="Vaillancourt B."/>
            <person name="Sakai H."/>
            <person name="Lee S.S."/>
            <person name="Kim J."/>
            <person name="Numa H."/>
            <person name="Itoh T."/>
            <person name="Buell C.R."/>
            <person name="Matsumoto T."/>
        </authorList>
    </citation>
    <scope>GENOME REANNOTATION</scope>
    <source>
        <strain>cv. Nipponbare</strain>
    </source>
</reference>
<reference key="6">
    <citation type="journal article" date="2005" name="PLoS Biol.">
        <title>The genomes of Oryza sativa: a history of duplications.</title>
        <authorList>
            <person name="Yu J."/>
            <person name="Wang J."/>
            <person name="Lin W."/>
            <person name="Li S."/>
            <person name="Li H."/>
            <person name="Zhou J."/>
            <person name="Ni P."/>
            <person name="Dong W."/>
            <person name="Hu S."/>
            <person name="Zeng C."/>
            <person name="Zhang J."/>
            <person name="Zhang Y."/>
            <person name="Li R."/>
            <person name="Xu Z."/>
            <person name="Li S."/>
            <person name="Li X."/>
            <person name="Zheng H."/>
            <person name="Cong L."/>
            <person name="Lin L."/>
            <person name="Yin J."/>
            <person name="Geng J."/>
            <person name="Li G."/>
            <person name="Shi J."/>
            <person name="Liu J."/>
            <person name="Lv H."/>
            <person name="Li J."/>
            <person name="Wang J."/>
            <person name="Deng Y."/>
            <person name="Ran L."/>
            <person name="Shi X."/>
            <person name="Wang X."/>
            <person name="Wu Q."/>
            <person name="Li C."/>
            <person name="Ren X."/>
            <person name="Wang J."/>
            <person name="Wang X."/>
            <person name="Li D."/>
            <person name="Liu D."/>
            <person name="Zhang X."/>
            <person name="Ji Z."/>
            <person name="Zhao W."/>
            <person name="Sun Y."/>
            <person name="Zhang Z."/>
            <person name="Bao J."/>
            <person name="Han Y."/>
            <person name="Dong L."/>
            <person name="Ji J."/>
            <person name="Chen P."/>
            <person name="Wu S."/>
            <person name="Liu J."/>
            <person name="Xiao Y."/>
            <person name="Bu D."/>
            <person name="Tan J."/>
            <person name="Yang L."/>
            <person name="Ye C."/>
            <person name="Zhang J."/>
            <person name="Xu J."/>
            <person name="Zhou Y."/>
            <person name="Yu Y."/>
            <person name="Zhang B."/>
            <person name="Zhuang S."/>
            <person name="Wei H."/>
            <person name="Liu B."/>
            <person name="Lei M."/>
            <person name="Yu H."/>
            <person name="Li Y."/>
            <person name="Xu H."/>
            <person name="Wei S."/>
            <person name="He X."/>
            <person name="Fang L."/>
            <person name="Zhang Z."/>
            <person name="Zhang Y."/>
            <person name="Huang X."/>
            <person name="Su Z."/>
            <person name="Tong W."/>
            <person name="Li J."/>
            <person name="Tong Z."/>
            <person name="Li S."/>
            <person name="Ye J."/>
            <person name="Wang L."/>
            <person name="Fang L."/>
            <person name="Lei T."/>
            <person name="Chen C.-S."/>
            <person name="Chen H.-C."/>
            <person name="Xu Z."/>
            <person name="Li H."/>
            <person name="Huang H."/>
            <person name="Zhang F."/>
            <person name="Xu H."/>
            <person name="Li N."/>
            <person name="Zhao C."/>
            <person name="Li S."/>
            <person name="Dong L."/>
            <person name="Huang Y."/>
            <person name="Li L."/>
            <person name="Xi Y."/>
            <person name="Qi Q."/>
            <person name="Li W."/>
            <person name="Zhang B."/>
            <person name="Hu W."/>
            <person name="Zhang Y."/>
            <person name="Tian X."/>
            <person name="Jiao Y."/>
            <person name="Liang X."/>
            <person name="Jin J."/>
            <person name="Gao L."/>
            <person name="Zheng W."/>
            <person name="Hao B."/>
            <person name="Liu S.-M."/>
            <person name="Wang W."/>
            <person name="Yuan L."/>
            <person name="Cao M."/>
            <person name="McDermott J."/>
            <person name="Samudrala R."/>
            <person name="Wang J."/>
            <person name="Wong G.K.-S."/>
            <person name="Yang H."/>
        </authorList>
    </citation>
    <scope>NUCLEOTIDE SEQUENCE [LARGE SCALE GENOMIC DNA]</scope>
    <source>
        <strain>cv. Nipponbare</strain>
    </source>
</reference>
<reference key="7">
    <citation type="journal article" date="2005" name="Plant Cell Physiol.">
        <title>Identification of 33 rice aquaporin genes and analysis of their expression and function.</title>
        <authorList>
            <person name="Sakurai J."/>
            <person name="Ishikawa F."/>
            <person name="Yamaguchi T."/>
            <person name="Uemura M."/>
            <person name="Maeshima M."/>
        </authorList>
    </citation>
    <scope>NOMENCLATURE</scope>
    <scope>TISSUE SPECIFICITY</scope>
    <scope>INDUCTION</scope>
</reference>
<gene>
    <name type="primary">PIP1-1</name>
    <name type="synonym">PIP1A</name>
    <name type="synonym">RWC1</name>
    <name type="ordered locus">Os02g0666200</name>
    <name type="ordered locus">LOC_Os02g44630</name>
    <name type="ORF">OJ1486_E07.10</name>
    <name type="ORF">OsJ_007594</name>
    <name type="ORF">P0461B08.25</name>
</gene>
<proteinExistence type="evidence at transcript level"/>
<evidence type="ECO:0000250" key="1"/>
<evidence type="ECO:0000255" key="2"/>
<evidence type="ECO:0000256" key="3">
    <source>
        <dbReference type="SAM" id="MobiDB-lite"/>
    </source>
</evidence>
<evidence type="ECO:0000269" key="4">
    <source>
    </source>
</evidence>
<evidence type="ECO:0000269" key="5">
    <source>
    </source>
</evidence>
<evidence type="ECO:0000269" key="6">
    <source>
    </source>
</evidence>
<evidence type="ECO:0000305" key="7"/>